<keyword id="KW-1185">Reference proteome</keyword>
<keyword id="KW-0687">Ribonucleoprotein</keyword>
<keyword id="KW-0689">Ribosomal protein</keyword>
<keyword id="KW-0694">RNA-binding</keyword>
<keyword id="KW-0699">rRNA-binding</keyword>
<name>RL2_METTH</name>
<dbReference type="EMBL" id="AE000666">
    <property type="protein sequence ID" value="AAB84525.1"/>
    <property type="molecule type" value="Genomic_DNA"/>
</dbReference>
<dbReference type="PIR" id="F69165">
    <property type="entry name" value="F69165"/>
</dbReference>
<dbReference type="RefSeq" id="WP_010875647.1">
    <property type="nucleotide sequence ID" value="NC_000916.1"/>
</dbReference>
<dbReference type="SMR" id="O26113"/>
<dbReference type="FunCoup" id="O26113">
    <property type="interactions" value="144"/>
</dbReference>
<dbReference type="STRING" id="187420.MTH_5"/>
<dbReference type="PaxDb" id="187420-MTH_5"/>
<dbReference type="EnsemblBacteria" id="AAB84525">
    <property type="protein sequence ID" value="AAB84525"/>
    <property type="gene ID" value="MTH_5"/>
</dbReference>
<dbReference type="KEGG" id="mth:MTH_5"/>
<dbReference type="PATRIC" id="fig|187420.15.peg.5"/>
<dbReference type="HOGENOM" id="CLU_036235_0_3_2"/>
<dbReference type="InParanoid" id="O26113"/>
<dbReference type="Proteomes" id="UP000005223">
    <property type="component" value="Chromosome"/>
</dbReference>
<dbReference type="GO" id="GO:0022625">
    <property type="term" value="C:cytosolic large ribosomal subunit"/>
    <property type="evidence" value="ECO:0007669"/>
    <property type="project" value="TreeGrafter"/>
</dbReference>
<dbReference type="GO" id="GO:0019843">
    <property type="term" value="F:rRNA binding"/>
    <property type="evidence" value="ECO:0007669"/>
    <property type="project" value="UniProtKB-UniRule"/>
</dbReference>
<dbReference type="GO" id="GO:0003735">
    <property type="term" value="F:structural constituent of ribosome"/>
    <property type="evidence" value="ECO:0007669"/>
    <property type="project" value="InterPro"/>
</dbReference>
<dbReference type="GO" id="GO:0002181">
    <property type="term" value="P:cytoplasmic translation"/>
    <property type="evidence" value="ECO:0007669"/>
    <property type="project" value="TreeGrafter"/>
</dbReference>
<dbReference type="FunFam" id="2.40.50.140:FF:000020">
    <property type="entry name" value="60S ribosomal protein L2"/>
    <property type="match status" value="1"/>
</dbReference>
<dbReference type="FunFam" id="4.10.950.10:FF:000002">
    <property type="entry name" value="60S ribosomal protein L2"/>
    <property type="match status" value="1"/>
</dbReference>
<dbReference type="FunFam" id="2.30.30.30:FF:000006">
    <property type="entry name" value="60S ribosomal protein L8"/>
    <property type="match status" value="1"/>
</dbReference>
<dbReference type="Gene3D" id="2.30.30.30">
    <property type="match status" value="1"/>
</dbReference>
<dbReference type="Gene3D" id="2.40.50.140">
    <property type="entry name" value="Nucleic acid-binding proteins"/>
    <property type="match status" value="1"/>
</dbReference>
<dbReference type="Gene3D" id="4.10.950.10">
    <property type="entry name" value="Ribosomal protein L2, domain 3"/>
    <property type="match status" value="1"/>
</dbReference>
<dbReference type="HAMAP" id="MF_01320_A">
    <property type="entry name" value="Ribosomal_uL2_A"/>
    <property type="match status" value="1"/>
</dbReference>
<dbReference type="InterPro" id="IPR012340">
    <property type="entry name" value="NA-bd_OB-fold"/>
</dbReference>
<dbReference type="InterPro" id="IPR014722">
    <property type="entry name" value="Rib_uL2_dom2"/>
</dbReference>
<dbReference type="InterPro" id="IPR002171">
    <property type="entry name" value="Ribosomal_uL2"/>
</dbReference>
<dbReference type="InterPro" id="IPR023672">
    <property type="entry name" value="Ribosomal_uL2_arc_euk"/>
</dbReference>
<dbReference type="InterPro" id="IPR022669">
    <property type="entry name" value="Ribosomal_uL2_C"/>
</dbReference>
<dbReference type="InterPro" id="IPR014726">
    <property type="entry name" value="Ribosomal_uL2_dom3"/>
</dbReference>
<dbReference type="InterPro" id="IPR022666">
    <property type="entry name" value="Ribosomal_uL2_RNA-bd_dom"/>
</dbReference>
<dbReference type="InterPro" id="IPR008991">
    <property type="entry name" value="Translation_prot_SH3-like_sf"/>
</dbReference>
<dbReference type="NCBIfam" id="NF007180">
    <property type="entry name" value="PRK09612.1"/>
    <property type="match status" value="1"/>
</dbReference>
<dbReference type="PANTHER" id="PTHR13691:SF16">
    <property type="entry name" value="LARGE RIBOSOMAL SUBUNIT PROTEIN UL2"/>
    <property type="match status" value="1"/>
</dbReference>
<dbReference type="PANTHER" id="PTHR13691">
    <property type="entry name" value="RIBOSOMAL PROTEIN L2"/>
    <property type="match status" value="1"/>
</dbReference>
<dbReference type="Pfam" id="PF00181">
    <property type="entry name" value="Ribosomal_L2"/>
    <property type="match status" value="1"/>
</dbReference>
<dbReference type="Pfam" id="PF03947">
    <property type="entry name" value="Ribosomal_L2_C"/>
    <property type="match status" value="1"/>
</dbReference>
<dbReference type="PIRSF" id="PIRSF002158">
    <property type="entry name" value="Ribosomal_L2"/>
    <property type="match status" value="1"/>
</dbReference>
<dbReference type="SMART" id="SM01383">
    <property type="entry name" value="Ribosomal_L2"/>
    <property type="match status" value="1"/>
</dbReference>
<dbReference type="SMART" id="SM01382">
    <property type="entry name" value="Ribosomal_L2_C"/>
    <property type="match status" value="1"/>
</dbReference>
<dbReference type="SUPFAM" id="SSF50249">
    <property type="entry name" value="Nucleic acid-binding proteins"/>
    <property type="match status" value="1"/>
</dbReference>
<dbReference type="SUPFAM" id="SSF50104">
    <property type="entry name" value="Translation proteins SH3-like domain"/>
    <property type="match status" value="1"/>
</dbReference>
<gene>
    <name evidence="1" type="primary">rpl2</name>
    <name type="ordered locus">MTH_5</name>
</gene>
<sequence length="241" mass="26059">MGKRLISQRRGRGTPTYRSASHRFKGKIKYRAYDSIESEGSLKGKVVDIMHDPGRTAPVARVKFENGEERLILAPEALMLNEEVECGVKARVKPGNSLPLSEIPEGTPIYNIENRPGDGGKLVRSSGTYASLITHDADKAVIELPSGELKALNPQCRATVGVVAGGGRREKPFLKAGKKYHALRAKGKKSVTVRGVAMNAVDHPHGGGNRQHPGRPTTVSRHAPPGRKVGSIAARRTGKRR</sequence>
<protein>
    <recommendedName>
        <fullName evidence="1">Large ribosomal subunit protein uL2</fullName>
    </recommendedName>
    <alternativeName>
        <fullName evidence="3">50S ribosomal protein L2</fullName>
    </alternativeName>
</protein>
<accession>O26113</accession>
<reference key="1">
    <citation type="journal article" date="1997" name="J. Bacteriol.">
        <title>Complete genome sequence of Methanobacterium thermoautotrophicum deltaH: functional analysis and comparative genomics.</title>
        <authorList>
            <person name="Smith D.R."/>
            <person name="Doucette-Stamm L.A."/>
            <person name="Deloughery C."/>
            <person name="Lee H.-M."/>
            <person name="Dubois J."/>
            <person name="Aldredge T."/>
            <person name="Bashirzadeh R."/>
            <person name="Blakely D."/>
            <person name="Cook R."/>
            <person name="Gilbert K."/>
            <person name="Harrison D."/>
            <person name="Hoang L."/>
            <person name="Keagle P."/>
            <person name="Lumm W."/>
            <person name="Pothier B."/>
            <person name="Qiu D."/>
            <person name="Spadafora R."/>
            <person name="Vicare R."/>
            <person name="Wang Y."/>
            <person name="Wierzbowski J."/>
            <person name="Gibson R."/>
            <person name="Jiwani N."/>
            <person name="Caruso A."/>
            <person name="Bush D."/>
            <person name="Safer H."/>
            <person name="Patwell D."/>
            <person name="Prabhakar S."/>
            <person name="McDougall S."/>
            <person name="Shimer G."/>
            <person name="Goyal A."/>
            <person name="Pietrovski S."/>
            <person name="Church G.M."/>
            <person name="Daniels C.J."/>
            <person name="Mao J.-I."/>
            <person name="Rice P."/>
            <person name="Noelling J."/>
            <person name="Reeve J.N."/>
        </authorList>
    </citation>
    <scope>NUCLEOTIDE SEQUENCE [LARGE SCALE GENOMIC DNA]</scope>
    <source>
        <strain>ATCC 29096 / DSM 1053 / JCM 10044 / NBRC 100330 / Delta H</strain>
    </source>
</reference>
<comment type="function">
    <text evidence="1">One of the primary rRNA binding proteins. Required for association of the 30S and 50S subunits to form the 70S ribosome, for tRNA binding and peptide bond formation. It has been suggested to have peptidyltransferase activity; this is somewhat controversial. Makes several contacts with the 16S rRNA in the 70S ribosome.</text>
</comment>
<comment type="subunit">
    <text evidence="1">Part of the 50S ribosomal subunit. Forms a bridge to the 30S subunit in the 70S ribosome.</text>
</comment>
<comment type="similarity">
    <text evidence="1">Belongs to the universal ribosomal protein uL2 family.</text>
</comment>
<evidence type="ECO:0000255" key="1">
    <source>
        <dbReference type="HAMAP-Rule" id="MF_01320"/>
    </source>
</evidence>
<evidence type="ECO:0000256" key="2">
    <source>
        <dbReference type="SAM" id="MobiDB-lite"/>
    </source>
</evidence>
<evidence type="ECO:0000305" key="3"/>
<organism>
    <name type="scientific">Methanothermobacter thermautotrophicus (strain ATCC 29096 / DSM 1053 / JCM 10044 / NBRC 100330 / Delta H)</name>
    <name type="common">Methanobacterium thermoautotrophicum</name>
    <dbReference type="NCBI Taxonomy" id="187420"/>
    <lineage>
        <taxon>Archaea</taxon>
        <taxon>Methanobacteriati</taxon>
        <taxon>Methanobacteriota</taxon>
        <taxon>Methanomada group</taxon>
        <taxon>Methanobacteria</taxon>
        <taxon>Methanobacteriales</taxon>
        <taxon>Methanobacteriaceae</taxon>
        <taxon>Methanothermobacter</taxon>
    </lineage>
</organism>
<proteinExistence type="inferred from homology"/>
<feature type="chain" id="PRO_0000129719" description="Large ribosomal subunit protein uL2">
    <location>
        <begin position="1"/>
        <end position="241"/>
    </location>
</feature>
<feature type="region of interest" description="Disordered" evidence="2">
    <location>
        <begin position="1"/>
        <end position="21"/>
    </location>
</feature>
<feature type="region of interest" description="Disordered" evidence="2">
    <location>
        <begin position="200"/>
        <end position="241"/>
    </location>
</feature>
<feature type="compositionally biased region" description="Basic residues" evidence="2">
    <location>
        <begin position="1"/>
        <end position="12"/>
    </location>
</feature>